<reference key="1">
    <citation type="submission" date="1998-09" db="EMBL/GenBank/DDBJ databases">
        <title>Cloning of a sugar transporter gene, a G-beta subunit like gene and three novel genes in human chromosome 9q34.</title>
        <authorList>
            <person name="Young J.M."/>
            <person name="Woodward K.J."/>
            <person name="Aziz S."/>
            <person name="Burley M."/>
            <person name="Kwiatkowski D.J."/>
            <person name="Povey S."/>
        </authorList>
    </citation>
    <scope>NUCLEOTIDE SEQUENCE [MRNA] (ISOFORM 1)</scope>
    <source>
        <tissue>Lymphoid tissue</tissue>
    </source>
</reference>
<reference key="2">
    <citation type="journal article" date="2003" name="Genome Res.">
        <title>The secreted protein discovery initiative (SPDI), a large-scale effort to identify novel human secreted and transmembrane proteins: a bioinformatics assessment.</title>
        <authorList>
            <person name="Clark H.F."/>
            <person name="Gurney A.L."/>
            <person name="Abaya E."/>
            <person name="Baker K."/>
            <person name="Baldwin D.T."/>
            <person name="Brush J."/>
            <person name="Chen J."/>
            <person name="Chow B."/>
            <person name="Chui C."/>
            <person name="Crowley C."/>
            <person name="Currell B."/>
            <person name="Deuel B."/>
            <person name="Dowd P."/>
            <person name="Eaton D."/>
            <person name="Foster J.S."/>
            <person name="Grimaldi C."/>
            <person name="Gu Q."/>
            <person name="Hass P.E."/>
            <person name="Heldens S."/>
            <person name="Huang A."/>
            <person name="Kim H.S."/>
            <person name="Klimowski L."/>
            <person name="Jin Y."/>
            <person name="Johnson S."/>
            <person name="Lee J."/>
            <person name="Lewis L."/>
            <person name="Liao D."/>
            <person name="Mark M.R."/>
            <person name="Robbie E."/>
            <person name="Sanchez C."/>
            <person name="Schoenfeld J."/>
            <person name="Seshagiri S."/>
            <person name="Simmons L."/>
            <person name="Singh J."/>
            <person name="Smith V."/>
            <person name="Stinson J."/>
            <person name="Vagts A."/>
            <person name="Vandlen R.L."/>
            <person name="Watanabe C."/>
            <person name="Wieand D."/>
            <person name="Woods K."/>
            <person name="Xie M.-H."/>
            <person name="Yansura D.G."/>
            <person name="Yi S."/>
            <person name="Yu G."/>
            <person name="Yuan J."/>
            <person name="Zhang M."/>
            <person name="Zhang Z."/>
            <person name="Goddard A.D."/>
            <person name="Wood W.I."/>
            <person name="Godowski P.J."/>
            <person name="Gray A.M."/>
        </authorList>
    </citation>
    <scope>NUCLEOTIDE SEQUENCE [LARGE SCALE MRNA] (ISOFORM 1)</scope>
</reference>
<reference key="3">
    <citation type="journal article" date="2004" name="Nat. Genet.">
        <title>Complete sequencing and characterization of 21,243 full-length human cDNAs.</title>
        <authorList>
            <person name="Ota T."/>
            <person name="Suzuki Y."/>
            <person name="Nishikawa T."/>
            <person name="Otsuki T."/>
            <person name="Sugiyama T."/>
            <person name="Irie R."/>
            <person name="Wakamatsu A."/>
            <person name="Hayashi K."/>
            <person name="Sato H."/>
            <person name="Nagai K."/>
            <person name="Kimura K."/>
            <person name="Makita H."/>
            <person name="Sekine M."/>
            <person name="Obayashi M."/>
            <person name="Nishi T."/>
            <person name="Shibahara T."/>
            <person name="Tanaka T."/>
            <person name="Ishii S."/>
            <person name="Yamamoto J."/>
            <person name="Saito K."/>
            <person name="Kawai Y."/>
            <person name="Isono Y."/>
            <person name="Nakamura Y."/>
            <person name="Nagahari K."/>
            <person name="Murakami K."/>
            <person name="Yasuda T."/>
            <person name="Iwayanagi T."/>
            <person name="Wagatsuma M."/>
            <person name="Shiratori A."/>
            <person name="Sudo H."/>
            <person name="Hosoiri T."/>
            <person name="Kaku Y."/>
            <person name="Kodaira H."/>
            <person name="Kondo H."/>
            <person name="Sugawara M."/>
            <person name="Takahashi M."/>
            <person name="Kanda K."/>
            <person name="Yokoi T."/>
            <person name="Furuya T."/>
            <person name="Kikkawa E."/>
            <person name="Omura Y."/>
            <person name="Abe K."/>
            <person name="Kamihara K."/>
            <person name="Katsuta N."/>
            <person name="Sato K."/>
            <person name="Tanikawa M."/>
            <person name="Yamazaki M."/>
            <person name="Ninomiya K."/>
            <person name="Ishibashi T."/>
            <person name="Yamashita H."/>
            <person name="Murakawa K."/>
            <person name="Fujimori K."/>
            <person name="Tanai H."/>
            <person name="Kimata M."/>
            <person name="Watanabe M."/>
            <person name="Hiraoka S."/>
            <person name="Chiba Y."/>
            <person name="Ishida S."/>
            <person name="Ono Y."/>
            <person name="Takiguchi S."/>
            <person name="Watanabe S."/>
            <person name="Yosida M."/>
            <person name="Hotuta T."/>
            <person name="Kusano J."/>
            <person name="Kanehori K."/>
            <person name="Takahashi-Fujii A."/>
            <person name="Hara H."/>
            <person name="Tanase T.-O."/>
            <person name="Nomura Y."/>
            <person name="Togiya S."/>
            <person name="Komai F."/>
            <person name="Hara R."/>
            <person name="Takeuchi K."/>
            <person name="Arita M."/>
            <person name="Imose N."/>
            <person name="Musashino K."/>
            <person name="Yuuki H."/>
            <person name="Oshima A."/>
            <person name="Sasaki N."/>
            <person name="Aotsuka S."/>
            <person name="Yoshikawa Y."/>
            <person name="Matsunawa H."/>
            <person name="Ichihara T."/>
            <person name="Shiohata N."/>
            <person name="Sano S."/>
            <person name="Moriya S."/>
            <person name="Momiyama H."/>
            <person name="Satoh N."/>
            <person name="Takami S."/>
            <person name="Terashima Y."/>
            <person name="Suzuki O."/>
            <person name="Nakagawa S."/>
            <person name="Senoh A."/>
            <person name="Mizoguchi H."/>
            <person name="Goto Y."/>
            <person name="Shimizu F."/>
            <person name="Wakebe H."/>
            <person name="Hishigaki H."/>
            <person name="Watanabe T."/>
            <person name="Sugiyama A."/>
            <person name="Takemoto M."/>
            <person name="Kawakami B."/>
            <person name="Yamazaki M."/>
            <person name="Watanabe K."/>
            <person name="Kumagai A."/>
            <person name="Itakura S."/>
            <person name="Fukuzumi Y."/>
            <person name="Fujimori Y."/>
            <person name="Komiyama M."/>
            <person name="Tashiro H."/>
            <person name="Tanigami A."/>
            <person name="Fujiwara T."/>
            <person name="Ono T."/>
            <person name="Yamada K."/>
            <person name="Fujii Y."/>
            <person name="Ozaki K."/>
            <person name="Hirao M."/>
            <person name="Ohmori Y."/>
            <person name="Kawabata A."/>
            <person name="Hikiji T."/>
            <person name="Kobatake N."/>
            <person name="Inagaki H."/>
            <person name="Ikema Y."/>
            <person name="Okamoto S."/>
            <person name="Okitani R."/>
            <person name="Kawakami T."/>
            <person name="Noguchi S."/>
            <person name="Itoh T."/>
            <person name="Shigeta K."/>
            <person name="Senba T."/>
            <person name="Matsumura K."/>
            <person name="Nakajima Y."/>
            <person name="Mizuno T."/>
            <person name="Morinaga M."/>
            <person name="Sasaki M."/>
            <person name="Togashi T."/>
            <person name="Oyama M."/>
            <person name="Hata H."/>
            <person name="Watanabe M."/>
            <person name="Komatsu T."/>
            <person name="Mizushima-Sugano J."/>
            <person name="Satoh T."/>
            <person name="Shirai Y."/>
            <person name="Takahashi Y."/>
            <person name="Nakagawa K."/>
            <person name="Okumura K."/>
            <person name="Nagase T."/>
            <person name="Nomura N."/>
            <person name="Kikuchi H."/>
            <person name="Masuho Y."/>
            <person name="Yamashita R."/>
            <person name="Nakai K."/>
            <person name="Yada T."/>
            <person name="Nakamura Y."/>
            <person name="Ohara O."/>
            <person name="Isogai T."/>
            <person name="Sugano S."/>
        </authorList>
    </citation>
    <scope>NUCLEOTIDE SEQUENCE [LARGE SCALE MRNA] (ISOFORMS 1; 2; 3 AND 4)</scope>
    <scope>VARIANT MET-58</scope>
    <source>
        <tissue>Teratocarcinoma</tissue>
        <tissue>Thalamus</tissue>
    </source>
</reference>
<reference key="4">
    <citation type="journal article" date="2005" name="DNA Res.">
        <title>Signal sequence and keyword trap in silico for selection of full-length human cDNAs encoding secretion or membrane proteins from oligo-capped cDNA libraries.</title>
        <authorList>
            <person name="Otsuki T."/>
            <person name="Ota T."/>
            <person name="Nishikawa T."/>
            <person name="Hayashi K."/>
            <person name="Suzuki Y."/>
            <person name="Yamamoto J."/>
            <person name="Wakamatsu A."/>
            <person name="Kimura K."/>
            <person name="Sakamoto K."/>
            <person name="Hatano N."/>
            <person name="Kawai Y."/>
            <person name="Ishii S."/>
            <person name="Saito K."/>
            <person name="Kojima S."/>
            <person name="Sugiyama T."/>
            <person name="Ono T."/>
            <person name="Okano K."/>
            <person name="Yoshikawa Y."/>
            <person name="Aotsuka S."/>
            <person name="Sasaki N."/>
            <person name="Hattori A."/>
            <person name="Okumura K."/>
            <person name="Nagai K."/>
            <person name="Sugano S."/>
            <person name="Isogai T."/>
        </authorList>
    </citation>
    <scope>NUCLEOTIDE SEQUENCE [MRNA] (ISOFORMS 1 AND 2)</scope>
    <source>
        <tissue>Teratocarcinoma</tissue>
    </source>
</reference>
<reference key="5">
    <citation type="journal article" date="2004" name="Nature">
        <title>DNA sequence and analysis of human chromosome 9.</title>
        <authorList>
            <person name="Humphray S.J."/>
            <person name="Oliver K."/>
            <person name="Hunt A.R."/>
            <person name="Plumb R.W."/>
            <person name="Loveland J.E."/>
            <person name="Howe K.L."/>
            <person name="Andrews T.D."/>
            <person name="Searle S."/>
            <person name="Hunt S.E."/>
            <person name="Scott C.E."/>
            <person name="Jones M.C."/>
            <person name="Ainscough R."/>
            <person name="Almeida J.P."/>
            <person name="Ambrose K.D."/>
            <person name="Ashwell R.I.S."/>
            <person name="Babbage A.K."/>
            <person name="Babbage S."/>
            <person name="Bagguley C.L."/>
            <person name="Bailey J."/>
            <person name="Banerjee R."/>
            <person name="Barker D.J."/>
            <person name="Barlow K.F."/>
            <person name="Bates K."/>
            <person name="Beasley H."/>
            <person name="Beasley O."/>
            <person name="Bird C.P."/>
            <person name="Bray-Allen S."/>
            <person name="Brown A.J."/>
            <person name="Brown J.Y."/>
            <person name="Burford D."/>
            <person name="Burrill W."/>
            <person name="Burton J."/>
            <person name="Carder C."/>
            <person name="Carter N.P."/>
            <person name="Chapman J.C."/>
            <person name="Chen Y."/>
            <person name="Clarke G."/>
            <person name="Clark S.Y."/>
            <person name="Clee C.M."/>
            <person name="Clegg S."/>
            <person name="Collier R.E."/>
            <person name="Corby N."/>
            <person name="Crosier M."/>
            <person name="Cummings A.T."/>
            <person name="Davies J."/>
            <person name="Dhami P."/>
            <person name="Dunn M."/>
            <person name="Dutta I."/>
            <person name="Dyer L.W."/>
            <person name="Earthrowl M.E."/>
            <person name="Faulkner L."/>
            <person name="Fleming C.J."/>
            <person name="Frankish A."/>
            <person name="Frankland J.A."/>
            <person name="French L."/>
            <person name="Fricker D.G."/>
            <person name="Garner P."/>
            <person name="Garnett J."/>
            <person name="Ghori J."/>
            <person name="Gilbert J.G.R."/>
            <person name="Glison C."/>
            <person name="Grafham D.V."/>
            <person name="Gribble S."/>
            <person name="Griffiths C."/>
            <person name="Griffiths-Jones S."/>
            <person name="Grocock R."/>
            <person name="Guy J."/>
            <person name="Hall R.E."/>
            <person name="Hammond S."/>
            <person name="Harley J.L."/>
            <person name="Harrison E.S.I."/>
            <person name="Hart E.A."/>
            <person name="Heath P.D."/>
            <person name="Henderson C.D."/>
            <person name="Hopkins B.L."/>
            <person name="Howard P.J."/>
            <person name="Howden P.J."/>
            <person name="Huckle E."/>
            <person name="Johnson C."/>
            <person name="Johnson D."/>
            <person name="Joy A.A."/>
            <person name="Kay M."/>
            <person name="Keenan S."/>
            <person name="Kershaw J.K."/>
            <person name="Kimberley A.M."/>
            <person name="King A."/>
            <person name="Knights A."/>
            <person name="Laird G.K."/>
            <person name="Langford C."/>
            <person name="Lawlor S."/>
            <person name="Leongamornlert D.A."/>
            <person name="Leversha M."/>
            <person name="Lloyd C."/>
            <person name="Lloyd D.M."/>
            <person name="Lovell J."/>
            <person name="Martin S."/>
            <person name="Mashreghi-Mohammadi M."/>
            <person name="Matthews L."/>
            <person name="McLaren S."/>
            <person name="McLay K.E."/>
            <person name="McMurray A."/>
            <person name="Milne S."/>
            <person name="Nickerson T."/>
            <person name="Nisbett J."/>
            <person name="Nordsiek G."/>
            <person name="Pearce A.V."/>
            <person name="Peck A.I."/>
            <person name="Porter K.M."/>
            <person name="Pandian R."/>
            <person name="Pelan S."/>
            <person name="Phillimore B."/>
            <person name="Povey S."/>
            <person name="Ramsey Y."/>
            <person name="Rand V."/>
            <person name="Scharfe M."/>
            <person name="Sehra H.K."/>
            <person name="Shownkeen R."/>
            <person name="Sims S.K."/>
            <person name="Skuce C.D."/>
            <person name="Smith M."/>
            <person name="Steward C.A."/>
            <person name="Swarbreck D."/>
            <person name="Sycamore N."/>
            <person name="Tester J."/>
            <person name="Thorpe A."/>
            <person name="Tracey A."/>
            <person name="Tromans A."/>
            <person name="Thomas D.W."/>
            <person name="Wall M."/>
            <person name="Wallis J.M."/>
            <person name="West A.P."/>
            <person name="Whitehead S.L."/>
            <person name="Willey D.L."/>
            <person name="Williams S.A."/>
            <person name="Wilming L."/>
            <person name="Wray P.W."/>
            <person name="Young L."/>
            <person name="Ashurst J.L."/>
            <person name="Coulson A."/>
            <person name="Blocker H."/>
            <person name="Durbin R.M."/>
            <person name="Sulston J.E."/>
            <person name="Hubbard T."/>
            <person name="Jackson M.J."/>
            <person name="Bentley D.R."/>
            <person name="Beck S."/>
            <person name="Rogers J."/>
            <person name="Dunham I."/>
        </authorList>
    </citation>
    <scope>NUCLEOTIDE SEQUENCE [LARGE SCALE GENOMIC DNA]</scope>
</reference>
<reference key="6">
    <citation type="journal article" date="2004" name="Genome Res.">
        <title>The status, quality, and expansion of the NIH full-length cDNA project: the Mammalian Gene Collection (MGC).</title>
        <authorList>
            <consortium name="The MGC Project Team"/>
        </authorList>
    </citation>
    <scope>NUCLEOTIDE SEQUENCE [LARGE SCALE MRNA] (ISOFORM 1)</scope>
    <source>
        <tissue>Pancreas</tissue>
    </source>
</reference>
<reference key="7">
    <citation type="journal article" date="2019" name="Nature">
        <title>Flower isoforms promote competitive growth in cancer.</title>
        <authorList>
            <person name="Madan E."/>
            <person name="Pelham C.J."/>
            <person name="Nagane M."/>
            <person name="Parker T.M."/>
            <person name="Canas-Marques R."/>
            <person name="Fazio K."/>
            <person name="Shaik K."/>
            <person name="Yuan Y."/>
            <person name="Henriques V."/>
            <person name="Galzerano A."/>
            <person name="Yamashita T."/>
            <person name="Pinto M.A.F."/>
            <person name="Palma A.M."/>
            <person name="Camacho D."/>
            <person name="Vieira A."/>
            <person name="Soldini D."/>
            <person name="Nakshatri H."/>
            <person name="Post S.R."/>
            <person name="Rhiner C."/>
            <person name="Yamashita H."/>
            <person name="Accardi D."/>
            <person name="Hansen L.A."/>
            <person name="Carvalho C."/>
            <person name="Beltran A.L."/>
            <person name="Kuppusamy P."/>
            <person name="Gogna R."/>
            <person name="Moreno E."/>
        </authorList>
    </citation>
    <scope>FUNCTION</scope>
    <scope>TISSUE SPECIFICITY</scope>
</reference>
<reference key="8">
    <citation type="journal article" date="2023" name="J. Biol. Chem.">
        <title>Membrane structure and internalization dynamics of human Flower isoforms hFWE3 and hFWE4 indicate a conserved endocytic role for hFWE4.</title>
        <authorList>
            <person name="Rudd J.C."/>
            <person name="Maity S."/>
            <person name="Grunkemeyer J.A."/>
            <person name="Snyder J.C."/>
            <person name="Lovas S."/>
            <person name="Hansen L.A."/>
        </authorList>
    </citation>
    <scope>SYNTHESIS OF 1-25; 51-58; 85-95; 121-141 AND 144-172</scope>
    <scope>FUNCTION</scope>
    <scope>SUBCELLULAR LOCATION (ISOFORMS 1 AND 2)</scope>
    <scope>MUTAGENESIS OF 25-TRP--LEU-30 AND 149-TYR--ILE-152</scope>
</reference>
<gene>
    <name type="primary">CACFD1</name>
    <name type="synonym">C9orf7</name>
    <name type="ORF">PSEC0107</name>
    <name type="ORF">PSEC0248</name>
    <name type="ORF">UNQ3071/PRO9903</name>
</gene>
<keyword id="KW-0025">Alternative splicing</keyword>
<keyword id="KW-1003">Cell membrane</keyword>
<keyword id="KW-0968">Cytoplasmic vesicle</keyword>
<keyword id="KW-0256">Endoplasmic reticulum</keyword>
<keyword id="KW-0967">Endosome</keyword>
<keyword id="KW-0333">Golgi apparatus</keyword>
<keyword id="KW-0472">Membrane</keyword>
<keyword id="KW-1267">Proteomics identification</keyword>
<keyword id="KW-1185">Reference proteome</keyword>
<keyword id="KW-0770">Synapse</keyword>
<keyword id="KW-0812">Transmembrane</keyword>
<keyword id="KW-1133">Transmembrane helix</keyword>
<comment type="function">
    <text evidence="1 2 5 6">Transmembrane protein which mediates synaptic endocytosis and fitness-based cell culling (PubMed:31341286, PubMed:37348560). In response to different stimulus strengths, controls two major modes of synaptic vesicle (SV) retrieval in hippocampal neurons; Clathrin-mediated endocytosis (CME) in response to mild stimulation and activity-dependent bulk endocytosis (ADBE) in response to strong stimulation (By similarity). In cytotoxic T-lymphoocytes (CTLs) facilitates calcium-dependent endocytosis of cytotoxic granules at the immuno synapse (By similarity). Different isoforms work as fitness fingerprints in 'loser' and 'winner' cells and thereby mediate win/lose decisions as part of the cell competition process (PubMed:31341286).</text>
</comment>
<comment type="function">
    <molecule>Isoform 1</molecule>
    <text evidence="5">Functions with the other flower isoforms to produce tissue-specific fitness fingerprints that identify unfit or fit cells during cell selection processes in order to maintain tissue health (PubMed:31341286). During cell competition, if levels of this isoform in cells is higher than in the surrounding neighboring cells, the cells are recognized as 'winner' cells, and do not undergo elimination via apoptosis (PubMed:31341286).</text>
</comment>
<comment type="function">
    <molecule>Isoform 2</molecule>
    <text evidence="5">Functions with the other flower isoforms to produce tissue-specific fitness fingerprints that identify unfit or fit cells during cell selection processes in order to maintain tissue health (PubMed:31341286). During cell competition, if levels of this isoform in unfit cells is higher than in the surrounding neighboring cells, the cells are recognized as 'loser' cells, and undergo elimination via apoptosis to be replaced by the surrounding healthy 'winner' cell population (PubMed:31341286).</text>
</comment>
<comment type="function">
    <molecule>Isoform 3</molecule>
    <text evidence="5">Functions with the other flower isoforms to produce tissue-specific fitness fingerprints that identify unfit or fit cells during cell selection processes in order to maintain tissue health (PubMed:31341286). During cell competition, if levels of this isoform in unfit cells is higher than in the surrounding neighboring cells, the cells are recognized as 'loser' cells, and undergo elimination via apoptosis to be replaced by the surrounding healthy 'winner' cell population (PubMed:31341286).</text>
</comment>
<comment type="function">
    <molecule>Isoform 4</molecule>
    <text evidence="5">Functions with the other flower isoforms to produce tissue-specific fitness fingerprints that identify unfit or fit cells during cell selection processes in order to maintain tissue health (PubMed:31341286). During cell competition, if levels of this isoform in cells is higher than in the surrounding neighboring cells, the cells are recognized as 'winner' cells, and do not undergo elimination via apoptosis (PubMed:31341286).</text>
</comment>
<comment type="subunit">
    <text evidence="2">Interacts with adaptor protein complex 2 (AP-2).</text>
</comment>
<comment type="interaction">
    <interactant intactId="EBI-8652492">
        <id>Q9UGQ2</id>
    </interactant>
    <interactant intactId="EBI-947253">
        <id>Q9UBD0</id>
        <label>HSFX2</label>
    </interactant>
    <organismsDiffer>false</organismsDiffer>
    <experiments>3</experiments>
</comment>
<comment type="interaction">
    <interactant intactId="EBI-8652492">
        <id>Q9UGQ2</id>
    </interactant>
    <interactant intactId="EBI-7055862">
        <id>Q96B96</id>
        <label>LDAF1</label>
    </interactant>
    <organismsDiffer>false</organismsDiffer>
    <experiments>4</experiments>
</comment>
<comment type="interaction">
    <interactant intactId="EBI-8652492">
        <id>Q9UGQ2</id>
    </interactant>
    <interactant intactId="EBI-7825321">
        <id>Q96E29</id>
        <label>MTERF3</label>
    </interactant>
    <organismsDiffer>false</organismsDiffer>
    <experiments>3</experiments>
</comment>
<comment type="interaction">
    <interactant intactId="EBI-8652492">
        <id>Q9UGQ2</id>
    </interactant>
    <interactant intactId="EBI-11978907">
        <id>Q9ULP0-2</id>
        <label>NDRG4</label>
    </interactant>
    <organismsDiffer>false</organismsDiffer>
    <experiments>3</experiments>
</comment>
<comment type="interaction">
    <interactant intactId="EBI-8652492">
        <id>Q9UGQ2</id>
    </interactant>
    <interactant intactId="EBI-14223623">
        <id>Q9UKF7-2</id>
        <label>PITPNC1</label>
    </interactant>
    <organismsDiffer>false</organismsDiffer>
    <experiments>3</experiments>
</comment>
<comment type="interaction">
    <interactant intactId="EBI-8652492">
        <id>Q9UGQ2</id>
    </interactant>
    <interactant intactId="EBI-1045072">
        <id>Q96T60</id>
        <label>PNKP</label>
    </interactant>
    <organismsDiffer>false</organismsDiffer>
    <experiments>3</experiments>
</comment>
<comment type="interaction">
    <interactant intactId="EBI-8652492">
        <id>Q9UGQ2</id>
    </interactant>
    <interactant intactId="EBI-3232108">
        <id>Q8N0V3</id>
        <label>RBFA</label>
    </interactant>
    <organismsDiffer>false</organismsDiffer>
    <experiments>3</experiments>
</comment>
<comment type="interaction">
    <interactant intactId="EBI-8652492">
        <id>Q9UGQ2</id>
    </interactant>
    <interactant intactId="EBI-2623095">
        <id>Q9Y371</id>
        <label>SH3GLB1</label>
    </interactant>
    <organismsDiffer>false</organismsDiffer>
    <experiments>3</experiments>
</comment>
<comment type="subcellular location">
    <subcellularLocation>
        <location evidence="3">Cell membrane</location>
        <topology evidence="3">Multi-pass membrane protein</topology>
    </subcellularLocation>
    <subcellularLocation>
        <location evidence="1">Cytoplasmic vesicle</location>
        <location evidence="1">Secretory vesicle</location>
        <location evidence="1">Synaptic vesicle</location>
    </subcellularLocation>
    <subcellularLocation>
        <location evidence="1">Golgi apparatus</location>
    </subcellularLocation>
    <subcellularLocation>
        <location evidence="2">Vesicle</location>
    </subcellularLocation>
    <text evidence="1 2">In cytotoxic T-lymphoocytes, localizes to intracellular vesicles that move to the immuno synapse (By similarity). Enriched in synaptic vesicles at the presynpatic vesicles (By similarity). Detected in the Golgi apparatus of cultured hippocampal neurons (By similarity).</text>
</comment>
<comment type="subcellular location">
    <molecule>Isoform 1</molecule>
    <subcellularLocation>
        <location evidence="6">Cell membrane</location>
        <topology evidence="6">Multi-pass membrane protein</topology>
    </subcellularLocation>
    <subcellularLocation>
        <location evidence="6">Early endosome</location>
    </subcellularLocation>
    <subcellularLocation>
        <location evidence="6">Recycling endosome</location>
    </subcellularLocation>
</comment>
<comment type="subcellular location">
    <molecule>Isoform 2</molecule>
    <subcellularLocation>
        <location evidence="6">Endoplasmic reticulum membrane</location>
        <topology evidence="6">Multi-pass membrane protein</topology>
    </subcellularLocation>
</comment>
<comment type="alternative products">
    <event type="alternative splicing"/>
    <isoform>
        <id>Q9UGQ2-1</id>
        <name>1</name>
        <name evidence="9">FWE4</name>
        <sequence type="displayed"/>
    </isoform>
    <isoform>
        <id>Q9UGQ2-2</id>
        <name>2</name>
        <name evidence="9">FWE3</name>
        <sequence type="described" ref="VSP_012997"/>
    </isoform>
    <isoform>
        <id>Q9UGQ2-3</id>
        <name>3</name>
        <name evidence="9">FWE1</name>
        <sequence type="described" ref="VSP_012997 VSP_042522"/>
    </isoform>
    <isoform>
        <id>Q9UGQ2-4</id>
        <name>4</name>
        <name evidence="9">FWE2</name>
        <sequence type="described" ref="VSP_042522"/>
    </isoform>
</comment>
<comment type="tissue specificity">
    <text evidence="5">Detected in skin cells at low levels of expression (at protein level).</text>
</comment>
<comment type="miscellaneous">
    <text evidence="5">In cancer cells, isoforms 1 and 3 isoforms (usually expressed in 'winner' cells) are up-regulated in cancer tissue whereas isoforms 2 and 4 isoform (usually expressed in 'loser' cells) are up-regulated in tissue adjacent to the cancer, suggesting they might be important for tumor growth.</text>
</comment>
<comment type="similarity">
    <text evidence="10">Belongs to the calcium channel flower family.</text>
</comment>
<evidence type="ECO:0000250" key="1">
    <source>
        <dbReference type="UniProtKB" id="D4A9I3"/>
    </source>
</evidence>
<evidence type="ECO:0000250" key="2">
    <source>
        <dbReference type="UniProtKB" id="Q8BG21"/>
    </source>
</evidence>
<evidence type="ECO:0000255" key="3"/>
<evidence type="ECO:0000269" key="4">
    <source>
    </source>
</evidence>
<evidence type="ECO:0000269" key="5">
    <source>
    </source>
</evidence>
<evidence type="ECO:0000269" key="6">
    <source>
    </source>
</evidence>
<evidence type="ECO:0000303" key="7">
    <source>
    </source>
</evidence>
<evidence type="ECO:0000303" key="8">
    <source>
    </source>
</evidence>
<evidence type="ECO:0000303" key="9">
    <source>
    </source>
</evidence>
<evidence type="ECO:0000305" key="10"/>
<name>FLOWR_HUMAN</name>
<protein>
    <recommendedName>
        <fullName>Calcium channel flower homolog</fullName>
    </recommendedName>
    <alternativeName>
        <fullName>Calcium channel flower domain-containing protein 1</fullName>
    </alternativeName>
</protein>
<proteinExistence type="evidence at protein level"/>
<accession>Q9UGQ2</accession>
<accession>B7Z3T8</accession>
<accession>B7Z5E1</accession>
<accession>F5GXX4</accession>
<accession>Q5SXD4</accession>
<accession>Q8NBM6</accession>
<sequence>MSSSGGAPGASASSAPPAQEEGMTWWYRWLCRLSGVLGAVSCAISGLFNCITIHPLNIAAGVWMIMNAFILLLCEAPFCCQFIEFANTVAEKVDRLRSWQKAVFYCGMAVVPIVISLTLTTLLGNAIAFATGVLYGLSALGKKGDAISYARIQQQRQQADEEKLAETLEGEL</sequence>
<dbReference type="EMBL" id="AJ011373">
    <property type="protein sequence ID" value="CAB66156.1"/>
    <property type="molecule type" value="mRNA"/>
</dbReference>
<dbReference type="EMBL" id="AK075548">
    <property type="protein sequence ID" value="BAC11691.1"/>
    <property type="molecule type" value="mRNA"/>
</dbReference>
<dbReference type="EMBL" id="AY358452">
    <property type="protein sequence ID" value="AAQ88817.1"/>
    <property type="molecule type" value="mRNA"/>
</dbReference>
<dbReference type="EMBL" id="AK074852">
    <property type="protein sequence ID" value="BAC11245.1"/>
    <property type="molecule type" value="mRNA"/>
</dbReference>
<dbReference type="EMBL" id="AK075416">
    <property type="protein sequence ID" value="BAC11606.1"/>
    <property type="molecule type" value="mRNA"/>
</dbReference>
<dbReference type="EMBL" id="AK296343">
    <property type="protein sequence ID" value="BAH12324.1"/>
    <property type="molecule type" value="mRNA"/>
</dbReference>
<dbReference type="EMBL" id="AK298820">
    <property type="protein sequence ID" value="BAH12877.1"/>
    <property type="molecule type" value="mRNA"/>
</dbReference>
<dbReference type="EMBL" id="AL593848">
    <property type="status" value="NOT_ANNOTATED_CDS"/>
    <property type="molecule type" value="Genomic_DNA"/>
</dbReference>
<dbReference type="EMBL" id="BC030558">
    <property type="protein sequence ID" value="AAH30558.1"/>
    <property type="molecule type" value="mRNA"/>
</dbReference>
<dbReference type="CCDS" id="CCDS48051.1">
    <molecule id="Q9UGQ2-2"/>
</dbReference>
<dbReference type="CCDS" id="CCDS56591.1">
    <molecule id="Q9UGQ2-4"/>
</dbReference>
<dbReference type="CCDS" id="CCDS56592.1">
    <molecule id="Q9UGQ2-3"/>
</dbReference>
<dbReference type="CCDS" id="CCDS6974.1">
    <molecule id="Q9UGQ2-1"/>
</dbReference>
<dbReference type="RefSeq" id="NP_001129247.1">
    <molecule id="Q9UGQ2-2"/>
    <property type="nucleotide sequence ID" value="NM_001135775.4"/>
</dbReference>
<dbReference type="RefSeq" id="NP_001229298.1">
    <molecule id="Q9UGQ2-4"/>
    <property type="nucleotide sequence ID" value="NM_001242369.2"/>
</dbReference>
<dbReference type="RefSeq" id="NP_001229299.1">
    <molecule id="Q9UGQ2-3"/>
    <property type="nucleotide sequence ID" value="NM_001242370.2"/>
</dbReference>
<dbReference type="RefSeq" id="NP_060056.1">
    <molecule id="Q9UGQ2-1"/>
    <property type="nucleotide sequence ID" value="NM_017586.5"/>
</dbReference>
<dbReference type="BioGRID" id="116275">
    <property type="interactions" value="21"/>
</dbReference>
<dbReference type="FunCoup" id="Q9UGQ2">
    <property type="interactions" value="36"/>
</dbReference>
<dbReference type="IntAct" id="Q9UGQ2">
    <property type="interactions" value="17"/>
</dbReference>
<dbReference type="MINT" id="Q9UGQ2"/>
<dbReference type="STRING" id="9606.ENSP00000440832"/>
<dbReference type="TCDB" id="1.A.55.1.1">
    <property type="family name" value="the synaptic vesicle-associated ca(2+) channel, flower (flower) family"/>
</dbReference>
<dbReference type="iPTMnet" id="Q9UGQ2"/>
<dbReference type="PhosphoSitePlus" id="Q9UGQ2"/>
<dbReference type="SwissPalm" id="Q9UGQ2"/>
<dbReference type="BioMuta" id="CACFD1"/>
<dbReference type="DMDM" id="61212251"/>
<dbReference type="jPOST" id="Q9UGQ2"/>
<dbReference type="MassIVE" id="Q9UGQ2"/>
<dbReference type="PaxDb" id="9606-ENSP00000440832"/>
<dbReference type="PeptideAtlas" id="Q9UGQ2"/>
<dbReference type="ProteomicsDB" id="84256">
    <molecule id="Q9UGQ2-1"/>
</dbReference>
<dbReference type="ProteomicsDB" id="84257">
    <molecule id="Q9UGQ2-2"/>
</dbReference>
<dbReference type="Pumba" id="Q9UGQ2"/>
<dbReference type="Antibodypedia" id="3031">
    <property type="antibodies" value="92 antibodies from 16 providers"/>
</dbReference>
<dbReference type="DNASU" id="11094"/>
<dbReference type="Ensembl" id="ENST00000291722.11">
    <molecule id="Q9UGQ2-2"/>
    <property type="protein sequence ID" value="ENSP00000291722.7"/>
    <property type="gene ID" value="ENSG00000160325.15"/>
</dbReference>
<dbReference type="Ensembl" id="ENST00000316948.9">
    <molecule id="Q9UGQ2-1"/>
    <property type="protein sequence ID" value="ENSP00000317121.4"/>
    <property type="gene ID" value="ENSG00000160325.15"/>
</dbReference>
<dbReference type="Ensembl" id="ENST00000540581.5">
    <molecule id="Q9UGQ2-4"/>
    <property type="protein sequence ID" value="ENSP00000440832.1"/>
    <property type="gene ID" value="ENSG00000160325.15"/>
</dbReference>
<dbReference type="Ensembl" id="ENST00000542192.5">
    <molecule id="Q9UGQ2-3"/>
    <property type="protein sequence ID" value="ENSP00000444328.1"/>
    <property type="gene ID" value="ENSG00000160325.15"/>
</dbReference>
<dbReference type="Ensembl" id="ENST00000625979.2">
    <molecule id="Q9UGQ2-2"/>
    <property type="protein sequence ID" value="ENSP00000486098.1"/>
    <property type="gene ID" value="ENSG00000280479.2"/>
</dbReference>
<dbReference type="Ensembl" id="ENST00000627083.2">
    <molecule id="Q9UGQ2-3"/>
    <property type="protein sequence ID" value="ENSP00000486812.1"/>
    <property type="gene ID" value="ENSG00000280479.2"/>
</dbReference>
<dbReference type="Ensembl" id="ENST00000629431.2">
    <molecule id="Q9UGQ2-1"/>
    <property type="protein sequence ID" value="ENSP00000486696.1"/>
    <property type="gene ID" value="ENSG00000280479.2"/>
</dbReference>
<dbReference type="Ensembl" id="ENST00000630997.2">
    <molecule id="Q9UGQ2-4"/>
    <property type="protein sequence ID" value="ENSP00000485922.1"/>
    <property type="gene ID" value="ENSG00000280479.2"/>
</dbReference>
<dbReference type="GeneID" id="11094"/>
<dbReference type="KEGG" id="hsa:11094"/>
<dbReference type="MANE-Select" id="ENST00000316948.9">
    <property type="protein sequence ID" value="ENSP00000317121.4"/>
    <property type="RefSeq nucleotide sequence ID" value="NM_017586.5"/>
    <property type="RefSeq protein sequence ID" value="NP_060056.1"/>
</dbReference>
<dbReference type="UCSC" id="uc004cec.3">
    <molecule id="Q9UGQ2-1"/>
    <property type="organism name" value="human"/>
</dbReference>
<dbReference type="AGR" id="HGNC:1365"/>
<dbReference type="CTD" id="11094"/>
<dbReference type="DisGeNET" id="11094"/>
<dbReference type="GeneCards" id="CACFD1"/>
<dbReference type="HGNC" id="HGNC:1365">
    <property type="gene designation" value="CACFD1"/>
</dbReference>
<dbReference type="HPA" id="ENSG00000160325">
    <property type="expression patterns" value="Tissue enhanced (liver)"/>
</dbReference>
<dbReference type="MIM" id="613104">
    <property type="type" value="gene"/>
</dbReference>
<dbReference type="neXtProt" id="NX_Q9UGQ2"/>
<dbReference type="OpenTargets" id="ENSG00000160325"/>
<dbReference type="PharmGKB" id="PA25982"/>
<dbReference type="VEuPathDB" id="HostDB:ENSG00000160325"/>
<dbReference type="eggNOG" id="KOG4085">
    <property type="taxonomic scope" value="Eukaryota"/>
</dbReference>
<dbReference type="GeneTree" id="ENSGT00390000000529"/>
<dbReference type="HOGENOM" id="CLU_1197263_0_0_1"/>
<dbReference type="InParanoid" id="Q9UGQ2"/>
<dbReference type="OMA" id="YWQKAAL"/>
<dbReference type="OrthoDB" id="9934994at2759"/>
<dbReference type="PAN-GO" id="Q9UGQ2">
    <property type="GO annotations" value="1 GO annotation based on evolutionary models"/>
</dbReference>
<dbReference type="PhylomeDB" id="Q9UGQ2"/>
<dbReference type="TreeFam" id="TF105629"/>
<dbReference type="PathwayCommons" id="Q9UGQ2"/>
<dbReference type="SignaLink" id="Q9UGQ2"/>
<dbReference type="BioGRID-ORCS" id="11094">
    <property type="hits" value="12 hits in 1142 CRISPR screens"/>
</dbReference>
<dbReference type="ChiTaRS" id="CACFD1">
    <property type="organism name" value="human"/>
</dbReference>
<dbReference type="GenomeRNAi" id="11094"/>
<dbReference type="Pharos" id="Q9UGQ2">
    <property type="development level" value="Tdark"/>
</dbReference>
<dbReference type="PRO" id="PR:Q9UGQ2"/>
<dbReference type="Proteomes" id="UP000005640">
    <property type="component" value="Chromosome 9"/>
</dbReference>
<dbReference type="RNAct" id="Q9UGQ2">
    <property type="molecule type" value="protein"/>
</dbReference>
<dbReference type="Bgee" id="ENSG00000160325">
    <property type="expression patterns" value="Expressed in mucosa of transverse colon and 97 other cell types or tissues"/>
</dbReference>
<dbReference type="ExpressionAtlas" id="Q9UGQ2">
    <property type="expression patterns" value="baseline and differential"/>
</dbReference>
<dbReference type="GO" id="GO:0005769">
    <property type="term" value="C:early endosome"/>
    <property type="evidence" value="ECO:0007669"/>
    <property type="project" value="UniProtKB-SubCell"/>
</dbReference>
<dbReference type="GO" id="GO:0005789">
    <property type="term" value="C:endoplasmic reticulum membrane"/>
    <property type="evidence" value="ECO:0007669"/>
    <property type="project" value="UniProtKB-SubCell"/>
</dbReference>
<dbReference type="GO" id="GO:0005794">
    <property type="term" value="C:Golgi apparatus"/>
    <property type="evidence" value="ECO:0007669"/>
    <property type="project" value="UniProtKB-SubCell"/>
</dbReference>
<dbReference type="GO" id="GO:0005886">
    <property type="term" value="C:plasma membrane"/>
    <property type="evidence" value="ECO:0007669"/>
    <property type="project" value="UniProtKB-SubCell"/>
</dbReference>
<dbReference type="GO" id="GO:0055037">
    <property type="term" value="C:recycling endosome"/>
    <property type="evidence" value="ECO:0007669"/>
    <property type="project" value="UniProtKB-SubCell"/>
</dbReference>
<dbReference type="GO" id="GO:0008021">
    <property type="term" value="C:synaptic vesicle"/>
    <property type="evidence" value="ECO:0007669"/>
    <property type="project" value="UniProtKB-SubCell"/>
</dbReference>
<dbReference type="GO" id="GO:0016192">
    <property type="term" value="P:vesicle-mediated transport"/>
    <property type="evidence" value="ECO:0000318"/>
    <property type="project" value="GO_Central"/>
</dbReference>
<dbReference type="InterPro" id="IPR019365">
    <property type="entry name" value="TVP18/Ca-channel_flower"/>
</dbReference>
<dbReference type="PANTHER" id="PTHR13314">
    <property type="entry name" value="CALCIUM CHANNEL FLOWER HOMOLOG"/>
    <property type="match status" value="1"/>
</dbReference>
<dbReference type="PANTHER" id="PTHR13314:SF2">
    <property type="entry name" value="CALCIUM CHANNEL FLOWER HOMOLOG"/>
    <property type="match status" value="1"/>
</dbReference>
<dbReference type="Pfam" id="PF10233">
    <property type="entry name" value="Cg6151-P"/>
    <property type="match status" value="1"/>
</dbReference>
<dbReference type="SMART" id="SM01077">
    <property type="entry name" value="Cg6151-P"/>
    <property type="match status" value="1"/>
</dbReference>
<organism>
    <name type="scientific">Homo sapiens</name>
    <name type="common">Human</name>
    <dbReference type="NCBI Taxonomy" id="9606"/>
    <lineage>
        <taxon>Eukaryota</taxon>
        <taxon>Metazoa</taxon>
        <taxon>Chordata</taxon>
        <taxon>Craniata</taxon>
        <taxon>Vertebrata</taxon>
        <taxon>Euteleostomi</taxon>
        <taxon>Mammalia</taxon>
        <taxon>Eutheria</taxon>
        <taxon>Euarchontoglires</taxon>
        <taxon>Primates</taxon>
        <taxon>Haplorrhini</taxon>
        <taxon>Catarrhini</taxon>
        <taxon>Hominidae</taxon>
        <taxon>Homo</taxon>
    </lineage>
</organism>
<feature type="chain" id="PRO_0000089671" description="Calcium channel flower homolog">
    <location>
        <begin position="1"/>
        <end position="172"/>
    </location>
</feature>
<feature type="topological domain" description="Cytoplasmic" evidence="10">
    <location>
        <begin position="1"/>
        <end position="32"/>
    </location>
</feature>
<feature type="transmembrane region" description="Helical" evidence="3">
    <location>
        <begin position="33"/>
        <end position="53"/>
    </location>
</feature>
<feature type="topological domain" description="Extracellular" evidence="10">
    <location>
        <begin position="54"/>
        <end position="57"/>
    </location>
</feature>
<feature type="transmembrane region" description="Helical" evidence="3">
    <location>
        <begin position="58"/>
        <end position="78"/>
    </location>
</feature>
<feature type="topological domain" description="Cytoplasmic" evidence="10">
    <location>
        <begin position="79"/>
        <end position="102"/>
    </location>
</feature>
<feature type="transmembrane region" description="Helical" evidence="3">
    <location>
        <begin position="103"/>
        <end position="123"/>
    </location>
</feature>
<feature type="topological domain" description="Extracellular" evidence="10">
    <location>
        <begin position="124"/>
        <end position="125"/>
    </location>
</feature>
<feature type="transmembrane region" description="Helical" evidence="3">
    <location>
        <begin position="126"/>
        <end position="142"/>
    </location>
</feature>
<feature type="topological domain" description="Cytoplasmic" evidence="10">
    <location>
        <begin position="143"/>
        <end position="172"/>
    </location>
</feature>
<feature type="splice variant" id="VSP_012997" description="In isoform 2 and isoform 3." evidence="7 8">
    <original>IMNAFILLLCEAPFCCQFIEFANTVAEKVDRLRSWQKAVFYCG</original>
    <variation>M</variation>
    <location>
        <begin position="65"/>
        <end position="107"/>
    </location>
</feature>
<feature type="splice variant" id="VSP_042522" description="In isoform 3 and isoform 4." evidence="7">
    <original>GDAISYARIQQQRQQADEEKLAETLEGEL</original>
    <variation>AQTEAGSFAAQHPREPGPFSEGTRQAFATPAVVSGEIRMPAGAMRSPMPGSSSRGSRRMRRSSRRPWRGSCEGLGAPPSLSPLLALCGSK</variation>
    <location>
        <begin position="144"/>
        <end position="172"/>
    </location>
</feature>
<feature type="sequence variant" id="VAR_069103" description="In dbSNP:rs3124765." evidence="4">
    <original>I</original>
    <variation>M</variation>
    <location>
        <position position="58"/>
    </location>
</feature>
<feature type="mutagenesis site" description="Reduces internalization; when associated with 149-A--A-152." evidence="6">
    <original>WWYRWL</original>
    <variation>AAAAAA</variation>
    <location>
        <begin position="25"/>
        <end position="30"/>
    </location>
</feature>
<feature type="mutagenesis site" description="Reduces internalization; when associated with 25-A--A-30." evidence="6">
    <original>YARI</original>
    <variation>AAAA</variation>
    <location>
        <begin position="149"/>
        <end position="152"/>
    </location>
</feature>
<feature type="sequence conflict" description="In Ref. 3; BAH12324." evidence="10" ref="3">
    <original>V</original>
    <variation>D</variation>
    <location>
        <position position="110"/>
    </location>
</feature>